<comment type="subcellular location">
    <subcellularLocation>
        <location evidence="1">Cell membrane</location>
        <topology evidence="1">Multi-pass membrane protein</topology>
    </subcellularLocation>
</comment>
<comment type="similarity">
    <text evidence="1">Belongs to the UPF0756 family.</text>
</comment>
<comment type="sequence caution" evidence="2">
    <conflict type="erroneous initiation">
        <sequence resource="EMBL-CDS" id="CAM86348"/>
    </conflict>
</comment>
<name>Y1440_ACIBY</name>
<feature type="chain" id="PRO_0000388809" description="UPF0756 membrane protein ABAYE1440">
    <location>
        <begin position="1"/>
        <end position="150"/>
    </location>
</feature>
<feature type="transmembrane region" description="Helical" evidence="1">
    <location>
        <begin position="1"/>
        <end position="21"/>
    </location>
</feature>
<feature type="transmembrane region" description="Helical" evidence="1">
    <location>
        <begin position="45"/>
        <end position="65"/>
    </location>
</feature>
<feature type="transmembrane region" description="Helical" evidence="1">
    <location>
        <begin position="83"/>
        <end position="103"/>
    </location>
</feature>
<feature type="transmembrane region" description="Helical" evidence="1">
    <location>
        <begin position="115"/>
        <end position="135"/>
    </location>
</feature>
<proteinExistence type="inferred from homology"/>
<dbReference type="EMBL" id="CU459141">
    <property type="protein sequence ID" value="CAM86348.1"/>
    <property type="status" value="ALT_INIT"/>
    <property type="molecule type" value="Genomic_DNA"/>
</dbReference>
<dbReference type="RefSeq" id="WP_000880858.1">
    <property type="nucleotide sequence ID" value="NC_010410.1"/>
</dbReference>
<dbReference type="EnsemblBacteria" id="CAM86348">
    <property type="protein sequence ID" value="CAM86348"/>
    <property type="gene ID" value="ABAYE1440"/>
</dbReference>
<dbReference type="KEGG" id="aby:ABAYE1440"/>
<dbReference type="HOGENOM" id="CLU_125889_0_0_6"/>
<dbReference type="GO" id="GO:0005886">
    <property type="term" value="C:plasma membrane"/>
    <property type="evidence" value="ECO:0007669"/>
    <property type="project" value="UniProtKB-SubCell"/>
</dbReference>
<dbReference type="HAMAP" id="MF_01874">
    <property type="entry name" value="UPF0756"/>
    <property type="match status" value="1"/>
</dbReference>
<dbReference type="InterPro" id="IPR007382">
    <property type="entry name" value="UPF0756_TM"/>
</dbReference>
<dbReference type="PANTHER" id="PTHR38452">
    <property type="entry name" value="UPF0756 MEMBRANE PROTEIN YEAL"/>
    <property type="match status" value="1"/>
</dbReference>
<dbReference type="PANTHER" id="PTHR38452:SF1">
    <property type="entry name" value="UPF0756 MEMBRANE PROTEIN YEAL"/>
    <property type="match status" value="1"/>
</dbReference>
<dbReference type="Pfam" id="PF04284">
    <property type="entry name" value="DUF441"/>
    <property type="match status" value="1"/>
</dbReference>
<keyword id="KW-1003">Cell membrane</keyword>
<keyword id="KW-0472">Membrane</keyword>
<keyword id="KW-0812">Transmembrane</keyword>
<keyword id="KW-1133">Transmembrane helix</keyword>
<organism>
    <name type="scientific">Acinetobacter baumannii (strain AYE)</name>
    <dbReference type="NCBI Taxonomy" id="509173"/>
    <lineage>
        <taxon>Bacteria</taxon>
        <taxon>Pseudomonadati</taxon>
        <taxon>Pseudomonadota</taxon>
        <taxon>Gammaproteobacteria</taxon>
        <taxon>Moraxellales</taxon>
        <taxon>Moraxellaceae</taxon>
        <taxon>Acinetobacter</taxon>
        <taxon>Acinetobacter calcoaceticus/baumannii complex</taxon>
    </lineage>
</organism>
<accession>B0V7A3</accession>
<protein>
    <recommendedName>
        <fullName evidence="1">UPF0756 membrane protein ABAYE1440</fullName>
    </recommendedName>
</protein>
<reference key="1">
    <citation type="journal article" date="2008" name="PLoS ONE">
        <title>Comparative analysis of Acinetobacters: three genomes for three lifestyles.</title>
        <authorList>
            <person name="Vallenet D."/>
            <person name="Nordmann P."/>
            <person name="Barbe V."/>
            <person name="Poirel L."/>
            <person name="Mangenot S."/>
            <person name="Bataille E."/>
            <person name="Dossat C."/>
            <person name="Gas S."/>
            <person name="Kreimeyer A."/>
            <person name="Lenoble P."/>
            <person name="Oztas S."/>
            <person name="Poulain J."/>
            <person name="Segurens B."/>
            <person name="Robert C."/>
            <person name="Abergel C."/>
            <person name="Claverie J.-M."/>
            <person name="Raoult D."/>
            <person name="Medigue C."/>
            <person name="Weissenbach J."/>
            <person name="Cruveiller S."/>
        </authorList>
    </citation>
    <scope>NUCLEOTIDE SEQUENCE [LARGE SCALE GENOMIC DNA]</scope>
    <source>
        <strain>AYE</strain>
    </source>
</reference>
<sequence length="150" mass="15405">MLAQFDVNLVVLLVLLICGLLSQNAAVTIAADVLIVIKITPLNQFFPYIQAHGLNLGILILTIGVLTPIASGKLSGESILKSFISFKSLVAIAIGLLVAWLGGRGVKLMSSQPDVVAGLLIGTVAGVALLRGVPVGPLIAAGLLSLFIGK</sequence>
<evidence type="ECO:0000255" key="1">
    <source>
        <dbReference type="HAMAP-Rule" id="MF_01874"/>
    </source>
</evidence>
<evidence type="ECO:0000305" key="2"/>
<gene>
    <name type="ordered locus">ABAYE1440</name>
</gene>